<reference key="1">
    <citation type="journal article" date="2008" name="PLoS ONE">
        <title>Environmental adaptation: genomic analysis of the piezotolerant and psychrotolerant deep-sea iron reducing bacterium Shewanella piezotolerans WP3.</title>
        <authorList>
            <person name="Wang F."/>
            <person name="Wang J."/>
            <person name="Jian H."/>
            <person name="Zhang B."/>
            <person name="Li S."/>
            <person name="Wang F."/>
            <person name="Zeng X."/>
            <person name="Gao L."/>
            <person name="Bartlett D.H."/>
            <person name="Yu J."/>
            <person name="Hu S."/>
            <person name="Xiao X."/>
        </authorList>
    </citation>
    <scope>NUCLEOTIDE SEQUENCE [LARGE SCALE GENOMIC DNA]</scope>
    <source>
        <strain>WP3 / JCM 13877</strain>
    </source>
</reference>
<protein>
    <recommendedName>
        <fullName evidence="1">N-acetyl-gamma-glutamyl-phosphate reductase</fullName>
        <shortName evidence="1">AGPR</shortName>
        <ecNumber evidence="1">1.2.1.38</ecNumber>
    </recommendedName>
    <alternativeName>
        <fullName evidence="1">N-acetyl-glutamate semialdehyde dehydrogenase</fullName>
        <shortName evidence="1">NAGSA dehydrogenase</shortName>
    </alternativeName>
</protein>
<feature type="chain" id="PRO_1000118063" description="N-acetyl-gamma-glutamyl-phosphate reductase">
    <location>
        <begin position="1"/>
        <end position="329"/>
    </location>
</feature>
<feature type="active site" evidence="1">
    <location>
        <position position="155"/>
    </location>
</feature>
<proteinExistence type="inferred from homology"/>
<sequence>MKNIAIIGASGYTGAQITSLINAEMGLSIQGLYVSENSLDKGKALAELYPTYSHIHLCLSPLNDDAKAAIVEQADAVVLATDHVVSLHLAAWFYQQGLAVFDLSGAYRFEALDKYPKWYGFTHEYPQVLADAVYGLAEWNAEKIATSKMIAVPGCYPTASLTALKPLADLLTDVMPVINAVSGVTGAGRKAQLHTSFCEVSLTPYGVLGHRHQPEIATQLGQEVIFTPHLGNFKRGILATITVQLAQGTTAKDIEAAYQCYDNAPLVTVKQNQFPKVDDVVQTPNCLIGWKFDPETNYLVVTSAIDNLMKGAASQALQCIKIHFNELLK</sequence>
<name>ARGC_SHEPW</name>
<organism>
    <name type="scientific">Shewanella piezotolerans (strain WP3 / JCM 13877)</name>
    <dbReference type="NCBI Taxonomy" id="225849"/>
    <lineage>
        <taxon>Bacteria</taxon>
        <taxon>Pseudomonadati</taxon>
        <taxon>Pseudomonadota</taxon>
        <taxon>Gammaproteobacteria</taxon>
        <taxon>Alteromonadales</taxon>
        <taxon>Shewanellaceae</taxon>
        <taxon>Shewanella</taxon>
    </lineage>
</organism>
<keyword id="KW-0028">Amino-acid biosynthesis</keyword>
<keyword id="KW-0055">Arginine biosynthesis</keyword>
<keyword id="KW-0963">Cytoplasm</keyword>
<keyword id="KW-0521">NADP</keyword>
<keyword id="KW-0560">Oxidoreductase</keyword>
<gene>
    <name evidence="1" type="primary">argC</name>
    <name type="ordered locus">swp_2055</name>
</gene>
<dbReference type="EC" id="1.2.1.38" evidence="1"/>
<dbReference type="EMBL" id="CP000472">
    <property type="protein sequence ID" value="ACJ28811.1"/>
    <property type="molecule type" value="Genomic_DNA"/>
</dbReference>
<dbReference type="RefSeq" id="WP_020912173.1">
    <property type="nucleotide sequence ID" value="NC_011566.1"/>
</dbReference>
<dbReference type="SMR" id="B8CNH7"/>
<dbReference type="STRING" id="225849.swp_2055"/>
<dbReference type="KEGG" id="swp:swp_2055"/>
<dbReference type="eggNOG" id="COG0002">
    <property type="taxonomic scope" value="Bacteria"/>
</dbReference>
<dbReference type="HOGENOM" id="CLU_006384_0_1_6"/>
<dbReference type="OrthoDB" id="9801289at2"/>
<dbReference type="UniPathway" id="UPA00068">
    <property type="reaction ID" value="UER00108"/>
</dbReference>
<dbReference type="Proteomes" id="UP000000753">
    <property type="component" value="Chromosome"/>
</dbReference>
<dbReference type="GO" id="GO:0005737">
    <property type="term" value="C:cytoplasm"/>
    <property type="evidence" value="ECO:0007669"/>
    <property type="project" value="UniProtKB-SubCell"/>
</dbReference>
<dbReference type="GO" id="GO:0003942">
    <property type="term" value="F:N-acetyl-gamma-glutamyl-phosphate reductase activity"/>
    <property type="evidence" value="ECO:0007669"/>
    <property type="project" value="UniProtKB-UniRule"/>
</dbReference>
<dbReference type="GO" id="GO:0051287">
    <property type="term" value="F:NAD binding"/>
    <property type="evidence" value="ECO:0007669"/>
    <property type="project" value="InterPro"/>
</dbReference>
<dbReference type="GO" id="GO:0070401">
    <property type="term" value="F:NADP+ binding"/>
    <property type="evidence" value="ECO:0007669"/>
    <property type="project" value="InterPro"/>
</dbReference>
<dbReference type="GO" id="GO:0006526">
    <property type="term" value="P:L-arginine biosynthetic process"/>
    <property type="evidence" value="ECO:0007669"/>
    <property type="project" value="UniProtKB-UniRule"/>
</dbReference>
<dbReference type="CDD" id="cd23934">
    <property type="entry name" value="AGPR_1_C"/>
    <property type="match status" value="1"/>
</dbReference>
<dbReference type="CDD" id="cd17895">
    <property type="entry name" value="AGPR_1_N"/>
    <property type="match status" value="1"/>
</dbReference>
<dbReference type="FunFam" id="3.30.360.10:FF:000014">
    <property type="entry name" value="N-acetyl-gamma-glutamyl-phosphate reductase"/>
    <property type="match status" value="1"/>
</dbReference>
<dbReference type="Gene3D" id="3.30.360.10">
    <property type="entry name" value="Dihydrodipicolinate Reductase, domain 2"/>
    <property type="match status" value="1"/>
</dbReference>
<dbReference type="Gene3D" id="3.40.50.720">
    <property type="entry name" value="NAD(P)-binding Rossmann-like Domain"/>
    <property type="match status" value="1"/>
</dbReference>
<dbReference type="HAMAP" id="MF_00150">
    <property type="entry name" value="ArgC_type1"/>
    <property type="match status" value="1"/>
</dbReference>
<dbReference type="InterPro" id="IPR023013">
    <property type="entry name" value="AGPR_AS"/>
</dbReference>
<dbReference type="InterPro" id="IPR000706">
    <property type="entry name" value="AGPR_type-1"/>
</dbReference>
<dbReference type="InterPro" id="IPR036291">
    <property type="entry name" value="NAD(P)-bd_dom_sf"/>
</dbReference>
<dbReference type="InterPro" id="IPR050085">
    <property type="entry name" value="NAGSA_dehydrogenase"/>
</dbReference>
<dbReference type="InterPro" id="IPR000534">
    <property type="entry name" value="Semialdehyde_DH_NAD-bd"/>
</dbReference>
<dbReference type="NCBIfam" id="TIGR01850">
    <property type="entry name" value="argC"/>
    <property type="match status" value="1"/>
</dbReference>
<dbReference type="PANTHER" id="PTHR32338:SF10">
    <property type="entry name" value="N-ACETYL-GAMMA-GLUTAMYL-PHOSPHATE REDUCTASE, CHLOROPLASTIC-RELATED"/>
    <property type="match status" value="1"/>
</dbReference>
<dbReference type="PANTHER" id="PTHR32338">
    <property type="entry name" value="N-ACETYL-GAMMA-GLUTAMYL-PHOSPHATE REDUCTASE, CHLOROPLASTIC-RELATED-RELATED"/>
    <property type="match status" value="1"/>
</dbReference>
<dbReference type="Pfam" id="PF01118">
    <property type="entry name" value="Semialdhyde_dh"/>
    <property type="match status" value="1"/>
</dbReference>
<dbReference type="Pfam" id="PF22698">
    <property type="entry name" value="Semialdhyde_dhC_1"/>
    <property type="match status" value="1"/>
</dbReference>
<dbReference type="SMART" id="SM00859">
    <property type="entry name" value="Semialdhyde_dh"/>
    <property type="match status" value="1"/>
</dbReference>
<dbReference type="SUPFAM" id="SSF55347">
    <property type="entry name" value="Glyceraldehyde-3-phosphate dehydrogenase-like, C-terminal domain"/>
    <property type="match status" value="1"/>
</dbReference>
<dbReference type="SUPFAM" id="SSF51735">
    <property type="entry name" value="NAD(P)-binding Rossmann-fold domains"/>
    <property type="match status" value="1"/>
</dbReference>
<dbReference type="PROSITE" id="PS01224">
    <property type="entry name" value="ARGC"/>
    <property type="match status" value="1"/>
</dbReference>
<evidence type="ECO:0000255" key="1">
    <source>
        <dbReference type="HAMAP-Rule" id="MF_00150"/>
    </source>
</evidence>
<comment type="function">
    <text evidence="1">Catalyzes the NADPH-dependent reduction of N-acetyl-5-glutamyl phosphate to yield N-acetyl-L-glutamate 5-semialdehyde.</text>
</comment>
<comment type="catalytic activity">
    <reaction evidence="1">
        <text>N-acetyl-L-glutamate 5-semialdehyde + phosphate + NADP(+) = N-acetyl-L-glutamyl 5-phosphate + NADPH + H(+)</text>
        <dbReference type="Rhea" id="RHEA:21588"/>
        <dbReference type="ChEBI" id="CHEBI:15378"/>
        <dbReference type="ChEBI" id="CHEBI:29123"/>
        <dbReference type="ChEBI" id="CHEBI:43474"/>
        <dbReference type="ChEBI" id="CHEBI:57783"/>
        <dbReference type="ChEBI" id="CHEBI:57936"/>
        <dbReference type="ChEBI" id="CHEBI:58349"/>
        <dbReference type="EC" id="1.2.1.38"/>
    </reaction>
</comment>
<comment type="pathway">
    <text evidence="1">Amino-acid biosynthesis; L-arginine biosynthesis; N(2)-acetyl-L-ornithine from L-glutamate: step 3/4.</text>
</comment>
<comment type="subcellular location">
    <subcellularLocation>
        <location evidence="1">Cytoplasm</location>
    </subcellularLocation>
</comment>
<comment type="similarity">
    <text evidence="1">Belongs to the NAGSA dehydrogenase family. Type 1 subfamily.</text>
</comment>
<accession>B8CNH7</accession>